<sequence>MRIKRGFKARHRRKKILKLAKGFRGGHSKLFKTAKNTVDKALGYAYRDRKQRKRDFRRLWIARINAAVRMHSLSYSRFMHGLKKAGVELDRKVLAELAISDPSGFSKVVAVAAEQQ</sequence>
<dbReference type="EMBL" id="CP000859">
    <property type="protein sequence ID" value="ABW68844.1"/>
    <property type="molecule type" value="Genomic_DNA"/>
</dbReference>
<dbReference type="RefSeq" id="WP_012176455.1">
    <property type="nucleotide sequence ID" value="NC_009943.1"/>
</dbReference>
<dbReference type="SMR" id="A8ZZ71"/>
<dbReference type="STRING" id="96561.Dole_3041"/>
<dbReference type="KEGG" id="dol:Dole_3041"/>
<dbReference type="eggNOG" id="COG0292">
    <property type="taxonomic scope" value="Bacteria"/>
</dbReference>
<dbReference type="HOGENOM" id="CLU_123265_0_1_7"/>
<dbReference type="OrthoDB" id="9808966at2"/>
<dbReference type="Proteomes" id="UP000008561">
    <property type="component" value="Chromosome"/>
</dbReference>
<dbReference type="GO" id="GO:1990904">
    <property type="term" value="C:ribonucleoprotein complex"/>
    <property type="evidence" value="ECO:0007669"/>
    <property type="project" value="UniProtKB-KW"/>
</dbReference>
<dbReference type="GO" id="GO:0005840">
    <property type="term" value="C:ribosome"/>
    <property type="evidence" value="ECO:0007669"/>
    <property type="project" value="UniProtKB-KW"/>
</dbReference>
<dbReference type="GO" id="GO:0019843">
    <property type="term" value="F:rRNA binding"/>
    <property type="evidence" value="ECO:0007669"/>
    <property type="project" value="UniProtKB-UniRule"/>
</dbReference>
<dbReference type="GO" id="GO:0003735">
    <property type="term" value="F:structural constituent of ribosome"/>
    <property type="evidence" value="ECO:0007669"/>
    <property type="project" value="InterPro"/>
</dbReference>
<dbReference type="GO" id="GO:0000027">
    <property type="term" value="P:ribosomal large subunit assembly"/>
    <property type="evidence" value="ECO:0007669"/>
    <property type="project" value="UniProtKB-UniRule"/>
</dbReference>
<dbReference type="GO" id="GO:0006412">
    <property type="term" value="P:translation"/>
    <property type="evidence" value="ECO:0007669"/>
    <property type="project" value="InterPro"/>
</dbReference>
<dbReference type="CDD" id="cd07026">
    <property type="entry name" value="Ribosomal_L20"/>
    <property type="match status" value="1"/>
</dbReference>
<dbReference type="FunFam" id="1.10.1900.20:FF:000001">
    <property type="entry name" value="50S ribosomal protein L20"/>
    <property type="match status" value="1"/>
</dbReference>
<dbReference type="Gene3D" id="6.10.160.10">
    <property type="match status" value="1"/>
</dbReference>
<dbReference type="Gene3D" id="1.10.1900.20">
    <property type="entry name" value="Ribosomal protein L20"/>
    <property type="match status" value="1"/>
</dbReference>
<dbReference type="HAMAP" id="MF_00382">
    <property type="entry name" value="Ribosomal_bL20"/>
    <property type="match status" value="1"/>
</dbReference>
<dbReference type="InterPro" id="IPR005813">
    <property type="entry name" value="Ribosomal_bL20"/>
</dbReference>
<dbReference type="InterPro" id="IPR049946">
    <property type="entry name" value="RIBOSOMAL_L20_CS"/>
</dbReference>
<dbReference type="InterPro" id="IPR035566">
    <property type="entry name" value="Ribosomal_protein_bL20_C"/>
</dbReference>
<dbReference type="NCBIfam" id="TIGR01032">
    <property type="entry name" value="rplT_bact"/>
    <property type="match status" value="1"/>
</dbReference>
<dbReference type="PANTHER" id="PTHR10986">
    <property type="entry name" value="39S RIBOSOMAL PROTEIN L20"/>
    <property type="match status" value="1"/>
</dbReference>
<dbReference type="Pfam" id="PF00453">
    <property type="entry name" value="Ribosomal_L20"/>
    <property type="match status" value="1"/>
</dbReference>
<dbReference type="PRINTS" id="PR00062">
    <property type="entry name" value="RIBOSOMALL20"/>
</dbReference>
<dbReference type="SUPFAM" id="SSF74731">
    <property type="entry name" value="Ribosomal protein L20"/>
    <property type="match status" value="1"/>
</dbReference>
<dbReference type="PROSITE" id="PS00937">
    <property type="entry name" value="RIBOSOMAL_L20"/>
    <property type="match status" value="1"/>
</dbReference>
<comment type="function">
    <text evidence="1">Binds directly to 23S ribosomal RNA and is necessary for the in vitro assembly process of the 50S ribosomal subunit. It is not involved in the protein synthesizing functions of that subunit.</text>
</comment>
<comment type="similarity">
    <text evidence="1">Belongs to the bacterial ribosomal protein bL20 family.</text>
</comment>
<gene>
    <name evidence="1" type="primary">rplT</name>
    <name type="ordered locus">Dole_3041</name>
</gene>
<accession>A8ZZ71</accession>
<protein>
    <recommendedName>
        <fullName evidence="1">Large ribosomal subunit protein bL20</fullName>
    </recommendedName>
    <alternativeName>
        <fullName evidence="2">50S ribosomal protein L20</fullName>
    </alternativeName>
</protein>
<keyword id="KW-1185">Reference proteome</keyword>
<keyword id="KW-0687">Ribonucleoprotein</keyword>
<keyword id="KW-0689">Ribosomal protein</keyword>
<keyword id="KW-0694">RNA-binding</keyword>
<keyword id="KW-0699">rRNA-binding</keyword>
<feature type="chain" id="PRO_0000355466" description="Large ribosomal subunit protein bL20">
    <location>
        <begin position="1"/>
        <end position="116"/>
    </location>
</feature>
<proteinExistence type="inferred from homology"/>
<name>RL20_DESOH</name>
<reference key="1">
    <citation type="submission" date="2007-10" db="EMBL/GenBank/DDBJ databases">
        <title>Complete sequence of Desulfococcus oleovorans Hxd3.</title>
        <authorList>
            <consortium name="US DOE Joint Genome Institute"/>
            <person name="Copeland A."/>
            <person name="Lucas S."/>
            <person name="Lapidus A."/>
            <person name="Barry K."/>
            <person name="Glavina del Rio T."/>
            <person name="Dalin E."/>
            <person name="Tice H."/>
            <person name="Pitluck S."/>
            <person name="Kiss H."/>
            <person name="Brettin T."/>
            <person name="Bruce D."/>
            <person name="Detter J.C."/>
            <person name="Han C."/>
            <person name="Schmutz J."/>
            <person name="Larimer F."/>
            <person name="Land M."/>
            <person name="Hauser L."/>
            <person name="Kyrpides N."/>
            <person name="Kim E."/>
            <person name="Wawrik B."/>
            <person name="Richardson P."/>
        </authorList>
    </citation>
    <scope>NUCLEOTIDE SEQUENCE [LARGE SCALE GENOMIC DNA]</scope>
    <source>
        <strain>DSM 6200 / JCM 39069 / Hxd3</strain>
    </source>
</reference>
<evidence type="ECO:0000255" key="1">
    <source>
        <dbReference type="HAMAP-Rule" id="MF_00382"/>
    </source>
</evidence>
<evidence type="ECO:0000305" key="2"/>
<organism>
    <name type="scientific">Desulfosudis oleivorans (strain DSM 6200 / JCM 39069 / Hxd3)</name>
    <name type="common">Desulfococcus oleovorans</name>
    <dbReference type="NCBI Taxonomy" id="96561"/>
    <lineage>
        <taxon>Bacteria</taxon>
        <taxon>Pseudomonadati</taxon>
        <taxon>Thermodesulfobacteriota</taxon>
        <taxon>Desulfobacteria</taxon>
        <taxon>Desulfobacterales</taxon>
        <taxon>Desulfosudaceae</taxon>
        <taxon>Desulfosudis</taxon>
    </lineage>
</organism>